<evidence type="ECO:0000250" key="1"/>
<evidence type="ECO:0000255" key="2">
    <source>
        <dbReference type="PROSITE-ProRule" id="PRU00449"/>
    </source>
</evidence>
<evidence type="ECO:0000255" key="3">
    <source>
        <dbReference type="PROSITE-ProRule" id="PRU00451"/>
    </source>
</evidence>
<evidence type="ECO:0000256" key="4">
    <source>
        <dbReference type="SAM" id="MobiDB-lite"/>
    </source>
</evidence>
<evidence type="ECO:0000269" key="5">
    <source>
    </source>
</evidence>
<evidence type="ECO:0000312" key="6">
    <source>
        <dbReference type="EMBL" id="EAZ42855.1"/>
    </source>
</evidence>
<dbReference type="EMBL" id="AP005159">
    <property type="protein sequence ID" value="BAD10142.1"/>
    <property type="molecule type" value="Genomic_DNA"/>
</dbReference>
<dbReference type="EMBL" id="AP014964">
    <property type="protein sequence ID" value="BAT05596.1"/>
    <property type="molecule type" value="Genomic_DNA"/>
</dbReference>
<dbReference type="EMBL" id="CM000145">
    <property type="protein sequence ID" value="EAZ42855.1"/>
    <property type="molecule type" value="Genomic_DNA"/>
</dbReference>
<dbReference type="SMR" id="Q6Z541"/>
<dbReference type="FunCoup" id="Q6Z541">
    <property type="interactions" value="9"/>
</dbReference>
<dbReference type="STRING" id="39947.Q6Z541"/>
<dbReference type="PaxDb" id="39947-Q6Z541"/>
<dbReference type="EnsemblPlants" id="Os08t0436400-00">
    <property type="protein sequence ID" value="Os08t0436400-00"/>
    <property type="gene ID" value="Os08g0436400"/>
</dbReference>
<dbReference type="Gramene" id="Os08t0436400-00">
    <property type="protein sequence ID" value="Os08t0436400-00"/>
    <property type="gene ID" value="Os08g0436400"/>
</dbReference>
<dbReference type="eggNOG" id="KOG3173">
    <property type="taxonomic scope" value="Eukaryota"/>
</dbReference>
<dbReference type="HOGENOM" id="CLU_057016_5_0_1"/>
<dbReference type="InParanoid" id="Q6Z541"/>
<dbReference type="OMA" id="IKCAANG"/>
<dbReference type="OrthoDB" id="428577at2759"/>
<dbReference type="Proteomes" id="UP000000763">
    <property type="component" value="Chromosome 8"/>
</dbReference>
<dbReference type="Proteomes" id="UP000007752">
    <property type="component" value="Chromosome 8"/>
</dbReference>
<dbReference type="Proteomes" id="UP000059680">
    <property type="component" value="Chromosome 8"/>
</dbReference>
<dbReference type="GO" id="GO:0003677">
    <property type="term" value="F:DNA binding"/>
    <property type="evidence" value="ECO:0007669"/>
    <property type="project" value="InterPro"/>
</dbReference>
<dbReference type="GO" id="GO:0008270">
    <property type="term" value="F:zinc ion binding"/>
    <property type="evidence" value="ECO:0007669"/>
    <property type="project" value="UniProtKB-KW"/>
</dbReference>
<dbReference type="FunFam" id="4.10.1110.10:FF:000001">
    <property type="entry name" value="Zinc finger AN1-type containing 6"/>
    <property type="match status" value="1"/>
</dbReference>
<dbReference type="Gene3D" id="1.20.5.4770">
    <property type="match status" value="1"/>
</dbReference>
<dbReference type="Gene3D" id="4.10.240.30">
    <property type="match status" value="1"/>
</dbReference>
<dbReference type="Gene3D" id="4.10.1110.10">
    <property type="entry name" value="AN1-like Zinc finger"/>
    <property type="match status" value="1"/>
</dbReference>
<dbReference type="InterPro" id="IPR035896">
    <property type="entry name" value="AN1-like_Znf"/>
</dbReference>
<dbReference type="InterPro" id="IPR050652">
    <property type="entry name" value="AN1_A20_ZnFinger"/>
</dbReference>
<dbReference type="InterPro" id="IPR002653">
    <property type="entry name" value="Znf_A20"/>
</dbReference>
<dbReference type="InterPro" id="IPR000058">
    <property type="entry name" value="Znf_AN1"/>
</dbReference>
<dbReference type="PANTHER" id="PTHR10634">
    <property type="entry name" value="AN1-TYPE ZINC FINGER PROTEIN"/>
    <property type="match status" value="1"/>
</dbReference>
<dbReference type="PANTHER" id="PTHR10634:SF98">
    <property type="entry name" value="ZINC FINGER A20 AND AN1 DOMAIN-CONTAINING STRESS-ASSOCIATED PROTEIN 3"/>
    <property type="match status" value="1"/>
</dbReference>
<dbReference type="Pfam" id="PF01754">
    <property type="entry name" value="zf-A20"/>
    <property type="match status" value="2"/>
</dbReference>
<dbReference type="Pfam" id="PF01428">
    <property type="entry name" value="zf-AN1"/>
    <property type="match status" value="1"/>
</dbReference>
<dbReference type="SMART" id="SM00259">
    <property type="entry name" value="ZnF_A20"/>
    <property type="match status" value="2"/>
</dbReference>
<dbReference type="SMART" id="SM00154">
    <property type="entry name" value="ZnF_AN1"/>
    <property type="match status" value="1"/>
</dbReference>
<dbReference type="SUPFAM" id="SSF118310">
    <property type="entry name" value="AN1-like Zinc finger"/>
    <property type="match status" value="1"/>
</dbReference>
<dbReference type="SUPFAM" id="SSF57716">
    <property type="entry name" value="Glucocorticoid receptor-like (DNA-binding domain)"/>
    <property type="match status" value="2"/>
</dbReference>
<dbReference type="PROSITE" id="PS51036">
    <property type="entry name" value="ZF_A20"/>
    <property type="match status" value="2"/>
</dbReference>
<dbReference type="PROSITE" id="PS51039">
    <property type="entry name" value="ZF_AN1"/>
    <property type="match status" value="1"/>
</dbReference>
<proteinExistence type="evidence at transcript level"/>
<sequence>MEEQQAAAAGGGGGGGGASMCANGCGFFGSEATKKLCSKCYRDQLKAAPSSPPAAPDLVANEEEEASTAAAAAADEQLALCSSGCGFFGSKETNNMCSKCYRDHLKATSPLFSSSSSPATASTTDITVPIAPATTAPTPSLKGKEEEATAAASSSAAAAAKPNRCVACRKKVGLLGFECRCGGTFCSTHRHADKHACTFDFKKSDREKIAKENPLIVAPKITKF</sequence>
<protein>
    <recommendedName>
        <fullName>Zinc finger A20 and AN1 domain-containing stress-associated protein 12</fullName>
        <shortName>OsSAP12</shortName>
    </recommendedName>
</protein>
<organism>
    <name type="scientific">Oryza sativa subsp. japonica</name>
    <name type="common">Rice</name>
    <dbReference type="NCBI Taxonomy" id="39947"/>
    <lineage>
        <taxon>Eukaryota</taxon>
        <taxon>Viridiplantae</taxon>
        <taxon>Streptophyta</taxon>
        <taxon>Embryophyta</taxon>
        <taxon>Tracheophyta</taxon>
        <taxon>Spermatophyta</taxon>
        <taxon>Magnoliopsida</taxon>
        <taxon>Liliopsida</taxon>
        <taxon>Poales</taxon>
        <taxon>Poaceae</taxon>
        <taxon>BOP clade</taxon>
        <taxon>Oryzoideae</taxon>
        <taxon>Oryzeae</taxon>
        <taxon>Oryzinae</taxon>
        <taxon>Oryza</taxon>
        <taxon>Oryza sativa</taxon>
    </lineage>
</organism>
<keyword id="KW-0479">Metal-binding</keyword>
<keyword id="KW-1185">Reference proteome</keyword>
<keyword id="KW-0677">Repeat</keyword>
<keyword id="KW-0346">Stress response</keyword>
<keyword id="KW-0862">Zinc</keyword>
<keyword id="KW-0863">Zinc-finger</keyword>
<accession>Q6Z541</accession>
<accession>A3BTG6</accession>
<gene>
    <name type="primary">SAP12</name>
    <name type="ordered locus">Os08g0436400</name>
    <name type="ordered locus">LOC_Os08g33880</name>
    <name evidence="6" type="ORF">OsJ_27448</name>
    <name type="ORF">OSJNBa0016C11.6</name>
</gene>
<name>SAP12_ORYSJ</name>
<reference key="1">
    <citation type="journal article" date="2005" name="Nature">
        <title>The map-based sequence of the rice genome.</title>
        <authorList>
            <consortium name="International rice genome sequencing project (IRGSP)"/>
        </authorList>
    </citation>
    <scope>NUCLEOTIDE SEQUENCE [LARGE SCALE GENOMIC DNA]</scope>
    <source>
        <strain>cv. Nipponbare</strain>
    </source>
</reference>
<reference key="2">
    <citation type="journal article" date="2013" name="Rice">
        <title>Improvement of the Oryza sativa Nipponbare reference genome using next generation sequence and optical map data.</title>
        <authorList>
            <person name="Kawahara Y."/>
            <person name="de la Bastide M."/>
            <person name="Hamilton J.P."/>
            <person name="Kanamori H."/>
            <person name="McCombie W.R."/>
            <person name="Ouyang S."/>
            <person name="Schwartz D.C."/>
            <person name="Tanaka T."/>
            <person name="Wu J."/>
            <person name="Zhou S."/>
            <person name="Childs K.L."/>
            <person name="Davidson R.M."/>
            <person name="Lin H."/>
            <person name="Quesada-Ocampo L."/>
            <person name="Vaillancourt B."/>
            <person name="Sakai H."/>
            <person name="Lee S.S."/>
            <person name="Kim J."/>
            <person name="Numa H."/>
            <person name="Itoh T."/>
            <person name="Buell C.R."/>
            <person name="Matsumoto T."/>
        </authorList>
    </citation>
    <scope>GENOME REANNOTATION</scope>
    <source>
        <strain>cv. Nipponbare</strain>
    </source>
</reference>
<reference key="3">
    <citation type="journal article" date="2005" name="PLoS Biol.">
        <title>The genomes of Oryza sativa: a history of duplications.</title>
        <authorList>
            <person name="Yu J."/>
            <person name="Wang J."/>
            <person name="Lin W."/>
            <person name="Li S."/>
            <person name="Li H."/>
            <person name="Zhou J."/>
            <person name="Ni P."/>
            <person name="Dong W."/>
            <person name="Hu S."/>
            <person name="Zeng C."/>
            <person name="Zhang J."/>
            <person name="Zhang Y."/>
            <person name="Li R."/>
            <person name="Xu Z."/>
            <person name="Li S."/>
            <person name="Li X."/>
            <person name="Zheng H."/>
            <person name="Cong L."/>
            <person name="Lin L."/>
            <person name="Yin J."/>
            <person name="Geng J."/>
            <person name="Li G."/>
            <person name="Shi J."/>
            <person name="Liu J."/>
            <person name="Lv H."/>
            <person name="Li J."/>
            <person name="Wang J."/>
            <person name="Deng Y."/>
            <person name="Ran L."/>
            <person name="Shi X."/>
            <person name="Wang X."/>
            <person name="Wu Q."/>
            <person name="Li C."/>
            <person name="Ren X."/>
            <person name="Wang J."/>
            <person name="Wang X."/>
            <person name="Li D."/>
            <person name="Liu D."/>
            <person name="Zhang X."/>
            <person name="Ji Z."/>
            <person name="Zhao W."/>
            <person name="Sun Y."/>
            <person name="Zhang Z."/>
            <person name="Bao J."/>
            <person name="Han Y."/>
            <person name="Dong L."/>
            <person name="Ji J."/>
            <person name="Chen P."/>
            <person name="Wu S."/>
            <person name="Liu J."/>
            <person name="Xiao Y."/>
            <person name="Bu D."/>
            <person name="Tan J."/>
            <person name="Yang L."/>
            <person name="Ye C."/>
            <person name="Zhang J."/>
            <person name="Xu J."/>
            <person name="Zhou Y."/>
            <person name="Yu Y."/>
            <person name="Zhang B."/>
            <person name="Zhuang S."/>
            <person name="Wei H."/>
            <person name="Liu B."/>
            <person name="Lei M."/>
            <person name="Yu H."/>
            <person name="Li Y."/>
            <person name="Xu H."/>
            <person name="Wei S."/>
            <person name="He X."/>
            <person name="Fang L."/>
            <person name="Zhang Z."/>
            <person name="Zhang Y."/>
            <person name="Huang X."/>
            <person name="Su Z."/>
            <person name="Tong W."/>
            <person name="Li J."/>
            <person name="Tong Z."/>
            <person name="Li S."/>
            <person name="Ye J."/>
            <person name="Wang L."/>
            <person name="Fang L."/>
            <person name="Lei T."/>
            <person name="Chen C.-S."/>
            <person name="Chen H.-C."/>
            <person name="Xu Z."/>
            <person name="Li H."/>
            <person name="Huang H."/>
            <person name="Zhang F."/>
            <person name="Xu H."/>
            <person name="Li N."/>
            <person name="Zhao C."/>
            <person name="Li S."/>
            <person name="Dong L."/>
            <person name="Huang Y."/>
            <person name="Li L."/>
            <person name="Xi Y."/>
            <person name="Qi Q."/>
            <person name="Li W."/>
            <person name="Zhang B."/>
            <person name="Hu W."/>
            <person name="Zhang Y."/>
            <person name="Tian X."/>
            <person name="Jiao Y."/>
            <person name="Liang X."/>
            <person name="Jin J."/>
            <person name="Gao L."/>
            <person name="Zheng W."/>
            <person name="Hao B."/>
            <person name="Liu S.-M."/>
            <person name="Wang W."/>
            <person name="Yuan L."/>
            <person name="Cao M."/>
            <person name="McDermott J."/>
            <person name="Samudrala R."/>
            <person name="Wang J."/>
            <person name="Wong G.K.-S."/>
            <person name="Yang H."/>
        </authorList>
    </citation>
    <scope>NUCLEOTIDE SEQUENCE [LARGE SCALE GENOMIC DNA]</scope>
    <source>
        <strain>cv. Nipponbare</strain>
    </source>
</reference>
<reference key="4">
    <citation type="journal article" date="2006" name="Mol. Genet. Genomics">
        <title>Genome-wide analysis of the stress associated protein (SAP) gene family containing A20/AN1 zinc-finger(s) in rice and their phylogenetic relationship with Arabidopsis.</title>
        <authorList>
            <person name="Vij S."/>
            <person name="Tyagi A.K."/>
        </authorList>
    </citation>
    <scope>GENE FAMILY</scope>
    <scope>INDUCTION</scope>
</reference>
<comment type="function">
    <text evidence="1">May be involved in environmental stress response.</text>
</comment>
<comment type="induction">
    <text evidence="5">By cold, dehydration and salt stress.</text>
</comment>
<feature type="chain" id="PRO_0000269875" description="Zinc finger A20 and AN1 domain-containing stress-associated protein 12">
    <location>
        <begin position="1"/>
        <end position="224"/>
    </location>
</feature>
<feature type="zinc finger region" description="A20-type 1" evidence="3">
    <location>
        <begin position="15"/>
        <end position="49"/>
    </location>
</feature>
<feature type="zinc finger region" description="A20-type 2" evidence="3">
    <location>
        <begin position="75"/>
        <end position="109"/>
    </location>
</feature>
<feature type="zinc finger region" description="AN1-type" evidence="2">
    <location>
        <begin position="159"/>
        <end position="205"/>
    </location>
</feature>
<feature type="region of interest" description="Disordered" evidence="4">
    <location>
        <begin position="47"/>
        <end position="68"/>
    </location>
</feature>
<feature type="region of interest" description="Disordered" evidence="4">
    <location>
        <begin position="112"/>
        <end position="142"/>
    </location>
</feature>
<feature type="compositionally biased region" description="Low complexity" evidence="4">
    <location>
        <begin position="112"/>
        <end position="139"/>
    </location>
</feature>
<feature type="binding site" evidence="3">
    <location>
        <position position="21"/>
    </location>
    <ligand>
        <name>Zn(2+)</name>
        <dbReference type="ChEBI" id="CHEBI:29105"/>
        <label>1</label>
    </ligand>
</feature>
<feature type="binding site" evidence="3">
    <location>
        <position position="25"/>
    </location>
    <ligand>
        <name>Zn(2+)</name>
        <dbReference type="ChEBI" id="CHEBI:29105"/>
        <label>1</label>
    </ligand>
</feature>
<feature type="binding site" evidence="3">
    <location>
        <position position="37"/>
    </location>
    <ligand>
        <name>Zn(2+)</name>
        <dbReference type="ChEBI" id="CHEBI:29105"/>
        <label>1</label>
    </ligand>
</feature>
<feature type="binding site" evidence="3">
    <location>
        <position position="40"/>
    </location>
    <ligand>
        <name>Zn(2+)</name>
        <dbReference type="ChEBI" id="CHEBI:29105"/>
        <label>1</label>
    </ligand>
</feature>
<feature type="binding site" evidence="3">
    <location>
        <position position="81"/>
    </location>
    <ligand>
        <name>Zn(2+)</name>
        <dbReference type="ChEBI" id="CHEBI:29105"/>
        <label>2</label>
    </ligand>
</feature>
<feature type="binding site" evidence="3">
    <location>
        <position position="85"/>
    </location>
    <ligand>
        <name>Zn(2+)</name>
        <dbReference type="ChEBI" id="CHEBI:29105"/>
        <label>2</label>
    </ligand>
</feature>
<feature type="binding site" evidence="3">
    <location>
        <position position="97"/>
    </location>
    <ligand>
        <name>Zn(2+)</name>
        <dbReference type="ChEBI" id="CHEBI:29105"/>
        <label>2</label>
    </ligand>
</feature>
<feature type="binding site" evidence="3">
    <location>
        <position position="100"/>
    </location>
    <ligand>
        <name>Zn(2+)</name>
        <dbReference type="ChEBI" id="CHEBI:29105"/>
        <label>2</label>
    </ligand>
</feature>
<feature type="binding site" evidence="2">
    <location>
        <position position="165"/>
    </location>
    <ligand>
        <name>Zn(2+)</name>
        <dbReference type="ChEBI" id="CHEBI:29105"/>
        <label>3</label>
    </ligand>
</feature>
<feature type="binding site" evidence="2">
    <location>
        <position position="168"/>
    </location>
    <ligand>
        <name>Zn(2+)</name>
        <dbReference type="ChEBI" id="CHEBI:29105"/>
        <label>3</label>
    </ligand>
</feature>
<feature type="binding site" evidence="2">
    <location>
        <position position="179"/>
    </location>
    <ligand>
        <name>Zn(2+)</name>
        <dbReference type="ChEBI" id="CHEBI:29105"/>
        <label>4</label>
    </ligand>
</feature>
<feature type="binding site" evidence="2">
    <location>
        <position position="181"/>
    </location>
    <ligand>
        <name>Zn(2+)</name>
        <dbReference type="ChEBI" id="CHEBI:29105"/>
        <label>4</label>
    </ligand>
</feature>
<feature type="binding site" evidence="2">
    <location>
        <position position="186"/>
    </location>
    <ligand>
        <name>Zn(2+)</name>
        <dbReference type="ChEBI" id="CHEBI:29105"/>
        <label>3</label>
    </ligand>
</feature>
<feature type="binding site" evidence="2">
    <location>
        <position position="189"/>
    </location>
    <ligand>
        <name>Zn(2+)</name>
        <dbReference type="ChEBI" id="CHEBI:29105"/>
        <label>3</label>
    </ligand>
</feature>
<feature type="binding site" evidence="2">
    <location>
        <position position="195"/>
    </location>
    <ligand>
        <name>Zn(2+)</name>
        <dbReference type="ChEBI" id="CHEBI:29105"/>
        <label>4</label>
    </ligand>
</feature>
<feature type="binding site" evidence="2">
    <location>
        <position position="197"/>
    </location>
    <ligand>
        <name>Zn(2+)</name>
        <dbReference type="ChEBI" id="CHEBI:29105"/>
        <label>4</label>
    </ligand>
</feature>